<accession>A6BM72</accession>
<accession>Q17R86</accession>
<accession>Q6UXS5</accession>
<accession>Q8ND91</accession>
<accession>Q96KG6</accession>
<feature type="signal peptide" evidence="2">
    <location>
        <begin position="1"/>
        <end position="19"/>
    </location>
</feature>
<feature type="chain" id="PRO_0000309735" description="Multiple epidermal growth factor-like domains protein 11">
    <location>
        <begin position="20"/>
        <end position="1044"/>
    </location>
</feature>
<feature type="topological domain" description="Extracellular" evidence="2">
    <location>
        <begin position="20"/>
        <end position="848"/>
    </location>
</feature>
<feature type="transmembrane region" description="Helical" evidence="2">
    <location>
        <begin position="849"/>
        <end position="869"/>
    </location>
</feature>
<feature type="topological domain" description="Cytoplasmic" evidence="2">
    <location>
        <begin position="870"/>
        <end position="1044"/>
    </location>
</feature>
<feature type="domain" description="EMI" evidence="4">
    <location>
        <begin position="24"/>
        <end position="101"/>
    </location>
</feature>
<feature type="domain" description="EGF-like 1" evidence="3">
    <location>
        <begin position="95"/>
        <end position="130"/>
    </location>
</feature>
<feature type="domain" description="EGF-like 2" evidence="3">
    <location>
        <begin position="143"/>
        <end position="173"/>
    </location>
</feature>
<feature type="domain" description="EGF-like 3" evidence="3">
    <location>
        <begin position="181"/>
        <end position="216"/>
    </location>
</feature>
<feature type="domain" description="EGF-like 4" evidence="3">
    <location>
        <begin position="224"/>
        <end position="259"/>
    </location>
</feature>
<feature type="domain" description="EGF-like 5" evidence="3">
    <location>
        <begin position="267"/>
        <end position="302"/>
    </location>
</feature>
<feature type="domain" description="EGF-like 6" evidence="3">
    <location>
        <begin position="310"/>
        <end position="345"/>
    </location>
</feature>
<feature type="domain" description="EGF-like 7" evidence="3">
    <location>
        <begin position="399"/>
        <end position="434"/>
    </location>
</feature>
<feature type="domain" description="EGF-like 8" evidence="3">
    <location>
        <begin position="442"/>
        <end position="477"/>
    </location>
</feature>
<feature type="domain" description="EGF-like 9" evidence="3">
    <location>
        <begin position="490"/>
        <end position="520"/>
    </location>
</feature>
<feature type="domain" description="EGF-like 10" evidence="3">
    <location>
        <begin position="571"/>
        <end position="606"/>
    </location>
</feature>
<feature type="domain" description="EGF-like 11" evidence="3">
    <location>
        <begin position="659"/>
        <end position="694"/>
    </location>
</feature>
<feature type="domain" description="EGF-like 12" evidence="3">
    <location>
        <begin position="707"/>
        <end position="737"/>
    </location>
</feature>
<feature type="domain" description="EGF-like 13" evidence="3">
    <location>
        <begin position="750"/>
        <end position="780"/>
    </location>
</feature>
<feature type="domain" description="EGF-like 14" evidence="3">
    <location>
        <begin position="788"/>
        <end position="823"/>
    </location>
</feature>
<feature type="region of interest" description="Disordered" evidence="5">
    <location>
        <begin position="1023"/>
        <end position="1044"/>
    </location>
</feature>
<feature type="compositionally biased region" description="Polar residues" evidence="5">
    <location>
        <begin position="1033"/>
        <end position="1044"/>
    </location>
</feature>
<feature type="glycosylation site" description="N-linked (GlcNAc...) asparagine" evidence="2">
    <location>
        <position position="270"/>
    </location>
</feature>
<feature type="glycosylation site" description="N-linked (GlcNAc...) asparagine" evidence="2">
    <location>
        <position position="531"/>
    </location>
</feature>
<feature type="disulfide bond" evidence="2">
    <location>
        <begin position="28"/>
        <end position="89"/>
    </location>
</feature>
<feature type="disulfide bond" evidence="2">
    <location>
        <begin position="54"/>
        <end position="63"/>
    </location>
</feature>
<feature type="disulfide bond" evidence="2">
    <location>
        <begin position="88"/>
        <end position="99"/>
    </location>
</feature>
<feature type="disulfide bond" evidence="1">
    <location>
        <begin position="103"/>
        <end position="118"/>
    </location>
</feature>
<feature type="disulfide bond" evidence="1">
    <location>
        <begin position="120"/>
        <end position="129"/>
    </location>
</feature>
<feature type="disulfide bond" evidence="1">
    <location>
        <begin position="146"/>
        <end position="154"/>
    </location>
</feature>
<feature type="disulfide bond" evidence="1">
    <location>
        <begin position="148"/>
        <end position="161"/>
    </location>
</feature>
<feature type="disulfide bond" evidence="1">
    <location>
        <begin position="163"/>
        <end position="172"/>
    </location>
</feature>
<feature type="disulfide bond" evidence="1">
    <location>
        <begin position="185"/>
        <end position="197"/>
    </location>
</feature>
<feature type="disulfide bond" evidence="1">
    <location>
        <begin position="191"/>
        <end position="204"/>
    </location>
</feature>
<feature type="disulfide bond" evidence="1">
    <location>
        <begin position="206"/>
        <end position="215"/>
    </location>
</feature>
<feature type="disulfide bond" evidence="1">
    <location>
        <begin position="228"/>
        <end position="240"/>
    </location>
</feature>
<feature type="disulfide bond" evidence="1">
    <location>
        <begin position="234"/>
        <end position="247"/>
    </location>
</feature>
<feature type="disulfide bond" evidence="1">
    <location>
        <begin position="249"/>
        <end position="258"/>
    </location>
</feature>
<feature type="disulfide bond" evidence="1">
    <location>
        <begin position="271"/>
        <end position="283"/>
    </location>
</feature>
<feature type="disulfide bond" evidence="1">
    <location>
        <begin position="277"/>
        <end position="290"/>
    </location>
</feature>
<feature type="disulfide bond" evidence="1">
    <location>
        <begin position="292"/>
        <end position="301"/>
    </location>
</feature>
<feature type="disulfide bond" evidence="1">
    <location>
        <begin position="314"/>
        <end position="326"/>
    </location>
</feature>
<feature type="disulfide bond" evidence="1">
    <location>
        <begin position="320"/>
        <end position="333"/>
    </location>
</feature>
<feature type="disulfide bond" evidence="1">
    <location>
        <begin position="335"/>
        <end position="344"/>
    </location>
</feature>
<feature type="disulfide bond" evidence="1">
    <location>
        <begin position="403"/>
        <end position="415"/>
    </location>
</feature>
<feature type="disulfide bond" evidence="1">
    <location>
        <begin position="409"/>
        <end position="422"/>
    </location>
</feature>
<feature type="disulfide bond" evidence="1">
    <location>
        <begin position="424"/>
        <end position="433"/>
    </location>
</feature>
<feature type="disulfide bond" evidence="1">
    <location>
        <begin position="446"/>
        <end position="458"/>
    </location>
</feature>
<feature type="disulfide bond" evidence="1">
    <location>
        <begin position="452"/>
        <end position="465"/>
    </location>
</feature>
<feature type="disulfide bond" evidence="1">
    <location>
        <begin position="467"/>
        <end position="476"/>
    </location>
</feature>
<feature type="disulfide bond" evidence="1">
    <location>
        <begin position="493"/>
        <end position="501"/>
    </location>
</feature>
<feature type="disulfide bond" evidence="1">
    <location>
        <begin position="495"/>
        <end position="508"/>
    </location>
</feature>
<feature type="disulfide bond" evidence="1">
    <location>
        <begin position="510"/>
        <end position="519"/>
    </location>
</feature>
<feature type="disulfide bond" evidence="1">
    <location>
        <begin position="575"/>
        <end position="587"/>
    </location>
</feature>
<feature type="disulfide bond" evidence="1">
    <location>
        <begin position="581"/>
        <end position="594"/>
    </location>
</feature>
<feature type="disulfide bond" evidence="1">
    <location>
        <begin position="596"/>
        <end position="605"/>
    </location>
</feature>
<feature type="disulfide bond" evidence="1">
    <location>
        <begin position="663"/>
        <end position="675"/>
    </location>
</feature>
<feature type="disulfide bond" evidence="1">
    <location>
        <begin position="669"/>
        <end position="682"/>
    </location>
</feature>
<feature type="disulfide bond" evidence="1">
    <location>
        <begin position="684"/>
        <end position="693"/>
    </location>
</feature>
<feature type="disulfide bond" evidence="1">
    <location>
        <begin position="710"/>
        <end position="718"/>
    </location>
</feature>
<feature type="disulfide bond" evidence="1">
    <location>
        <begin position="712"/>
        <end position="725"/>
    </location>
</feature>
<feature type="disulfide bond" evidence="1">
    <location>
        <begin position="727"/>
        <end position="736"/>
    </location>
</feature>
<feature type="disulfide bond" evidence="1">
    <location>
        <begin position="753"/>
        <end position="761"/>
    </location>
</feature>
<feature type="disulfide bond" evidence="1">
    <location>
        <begin position="755"/>
        <end position="768"/>
    </location>
</feature>
<feature type="disulfide bond" evidence="1">
    <location>
        <begin position="770"/>
        <end position="779"/>
    </location>
</feature>
<feature type="disulfide bond" evidence="1">
    <location>
        <begin position="792"/>
        <end position="804"/>
    </location>
</feature>
<feature type="disulfide bond" evidence="1">
    <location>
        <begin position="798"/>
        <end position="811"/>
    </location>
</feature>
<feature type="disulfide bond" evidence="1">
    <location>
        <begin position="813"/>
        <end position="822"/>
    </location>
</feature>
<feature type="splice variant" id="VSP_029246" description="In isoform 4." evidence="11">
    <location>
        <begin position="1"/>
        <end position="827"/>
    </location>
</feature>
<feature type="splice variant" id="VSP_029247" description="In isoform 2." evidence="10">
    <location>
        <begin position="1"/>
        <end position="75"/>
    </location>
</feature>
<feature type="splice variant" id="VSP_029248" description="In isoform 2." evidence="10">
    <original>RGLRTMYRRRSQCCPGYYESGDFCIP</original>
    <variation>MHTPSIRSITHDAQTSSTGSSAPGTA</variation>
    <location>
        <begin position="76"/>
        <end position="101"/>
    </location>
</feature>
<feature type="splice variant" id="VSP_029249" description="In isoform 3." evidence="12">
    <original>CPAAFFGKDCGRVCQCQNGASCDHISGKCTCRTGFTGQHCEQRCAPGTFGYGCQQLCECMNNSTCDHVTGTCYCSPGFKGIRCDQAALMMEELNPYTKISPALGAERHSVGAVTGIMLLLFLIVVLLGLFAWHRRR</original>
    <variation>KPHLLASQPLRIPCCGLLATVGIVQTSREGGMQAAPGLVVPDSCPTRTEELCRGSSRPDWIQGIDKPKVLEGQGCKAAQQHFLGRTVGAYASVRMAPAVTTSVASAPAAQASPGNTVSRDVPQEPLAMGVSSYVSA</variation>
    <location>
        <begin position="740"/>
        <end position="875"/>
    </location>
</feature>
<feature type="splice variant" id="VSP_029250" description="In isoform 3." evidence="12">
    <location>
        <begin position="876"/>
        <end position="1044"/>
    </location>
</feature>
<feature type="splice variant" id="VSP_029251" description="In isoform 4." evidence="11">
    <original>GACGMDRRQNTYIMDKGFKDYMKESVCSSSTCSLNSSENPYATIKDPPILTCKLPESSYVE</original>
    <variation>ASTTPWWPVMEHLARPFSQRPRTQLSNKSLDRDTAGWTPYSYVNVLDQCPGGQVPARGLLH</variation>
    <location>
        <begin position="904"/>
        <end position="964"/>
    </location>
</feature>
<feature type="splice variant" id="VSP_029252" description="In isoform 4." evidence="11">
    <location>
        <begin position="965"/>
        <end position="1044"/>
    </location>
</feature>
<feature type="sequence variant" id="VAR_059261" description="In dbSNP:rs16949528." evidence="7">
    <original>S</original>
    <variation>N</variation>
    <location>
        <position position="95"/>
    </location>
</feature>
<feature type="sequence variant" id="VAR_036990" description="In dbSNP:rs333550.">
    <original>H</original>
    <variation>R</variation>
    <location>
        <position position="242"/>
    </location>
</feature>
<feature type="sequence variant" id="VAR_059262" description="In dbSNP:rs333550." evidence="6 7 9">
    <original>H</original>
    <variation>R</variation>
    <location>
        <position position="317"/>
    </location>
</feature>
<feature type="sequence variant" id="VAR_059263" description="In dbSNP:rs35309197.">
    <original>L</original>
    <variation>P</variation>
    <location>
        <position position="474"/>
    </location>
</feature>
<feature type="sequence variant" id="VAR_059264" description="In dbSNP:rs3803414." evidence="6">
    <original>L</original>
    <variation>F</variation>
    <location>
        <position position="861"/>
    </location>
</feature>
<feature type="sequence variant" id="VAR_059265" description="In dbSNP:rs2303374.">
    <original>I</original>
    <variation>T</variation>
    <location>
        <position position="988"/>
    </location>
</feature>
<protein>
    <recommendedName>
        <fullName>Multiple epidermal growth factor-like domains protein 11</fullName>
        <shortName>Multiple EGF-like domains protein 11</shortName>
    </recommendedName>
</protein>
<sequence>MVLSLTGLIAFSFLQATLALNPEDPNVCSHWESYAVTVQESYAHPFDQIYYTRCTDILNWFKCTRHRISYKTAYRRGLRTMYRRRSQCCPGYYESGDFCIPLCTEECVHGRCVSPDTCHCEPGWGGPDCSSGCDSDHWGPHCSNRCQCQNGALCNPITGACVCAAGFRGWRCEELCAPGTHGKGCQLPCQCRHGASCDPRAGECLCAPGYTGVYCEELCPPGSHGAHCELRCPCQNGGTCHHITGECACPPGWTGAVCAQPCPPGTFGQNCSQDCPCHHGGQCDHVTGQCHCTAGYMGDRCQEECPFGSFGFQCSQHCDCHNGGQCSPTTGACECEPGYKGPRCQERLCPEGLHGPGCTLPCPCDADNTISCHPVTGACTCQPGWSGHHCNESCPVGYYGDGCQLPCTCQNGADCHSITGGCTCAPGFMGEVCAVSCAAGTYGPNCSSICSCNNGGTCSPVDGSCTCKEGWQGLDCTLPCPSGTWGLNCNESCTCANGAACSPIDGSCSCTPGWLGDTCELPCPDGTFGLNCSEHCDCSHADGCDPVTGHCCCLAGWTGIRCDSTCPPGRWGPNCSVSCSCENGGSCSPEDGSCECAPGFRGPLCQRICPPGFYGHGCAQPCPLCVHSSRPCHHISGICECLPGFSGALCNQVCAGGYFGQDCAQLCSCANNGTCSPIDGSCQCFPGWIGKDCSQACPPGFWGPACFHACSCHNGASCSAEDGACHCTPGWTGLFCTQRCPAAFFGKDCGRVCQCQNGASCDHISGKCTCRTGFTGQHCEQRCAPGTFGYGCQQLCECMNNSTCDHVTGTCYCSPGFKGIRCDQAALMMEELNPYTKISPALGAERHSVGAVTGIMLLLFLIVVLLGLFAWHRRRQKEKGRDLAPRVSYTPAMRMTSTDYSLSGACGMDRRQNTYIMDKGFKDYMKESVCSSSTCSLNSSENPYATIKDPPILTCKLPESSYVEMKSPVHMGSPYTDVPSLSTSNKNIYEVEPTVSVVQEGCGHNSSYIQNAYDLPRNSHIPGHYDLLPVRQSPANGPSQDKQS</sequence>
<comment type="function">
    <text evidence="1">May regulate the mosaic spacing of specific neuron subtypes in the retina through homotypic retinal neuron repulsion. Mosaics provide a mechanism to distribute each cell type evenly across the retina, ensuring that all parts of the visual field have access to a full set of processing elements (By similarity).</text>
</comment>
<comment type="subunit">
    <text evidence="13">Homomer (Probable). Does not interact with MEGF10.</text>
</comment>
<comment type="interaction">
    <interactant intactId="EBI-947743">
        <id>A6BM72</id>
    </interactant>
    <interactant intactId="EBI-1210753">
        <id>Q7Z417</id>
        <label>NUFIP2</label>
    </interactant>
    <organismsDiffer>false</organismsDiffer>
    <experiments>3</experiments>
</comment>
<comment type="subcellular location">
    <subcellularLocation>
        <location evidence="8">Cell membrane</location>
        <topology evidence="8">Single-pass type I membrane protein</topology>
    </subcellularLocation>
    <subcellularLocation>
        <location evidence="8">Basolateral cell membrane</location>
        <topology evidence="8">Single-pass type I membrane protein</topology>
    </subcellularLocation>
    <text>Forms an irregular, mosaic-like adhesion pattern in region of the cell that becomes firmely fixed to the substrate. Localized to protruding lamellipodia. Does not localize with MEGF10.</text>
</comment>
<comment type="alternative products">
    <event type="alternative splicing"/>
    <isoform>
        <id>A6BM72-1</id>
        <name>1</name>
        <sequence type="displayed"/>
    </isoform>
    <isoform>
        <id>A6BM72-2</id>
        <name>2</name>
        <sequence type="described" ref="VSP_029247 VSP_029248"/>
    </isoform>
    <isoform>
        <id>A6BM72-3</id>
        <name>3</name>
        <sequence type="described" ref="VSP_029249 VSP_029250"/>
    </isoform>
    <isoform>
        <id>A6BM72-4</id>
        <name>4</name>
        <sequence type="described" ref="VSP_029246 VSP_029251 VSP_029252"/>
    </isoform>
</comment>
<comment type="similarity">
    <text evidence="13">Belongs to the MEGF family.</text>
</comment>
<comment type="sequence caution" evidence="13">
    <conflict type="erroneous initiation">
        <sequence resource="EMBL-CDS" id="BAB47410"/>
    </conflict>
    <text>Truncated N-terminus.</text>
</comment>
<comment type="sequence caution" evidence="13">
    <conflict type="erroneous initiation">
        <sequence resource="EMBL-CDS" id="CAD38994"/>
    </conflict>
    <text>Truncated N-terminus.</text>
</comment>
<proteinExistence type="evidence at protein level"/>
<evidence type="ECO:0000250" key="1"/>
<evidence type="ECO:0000255" key="2"/>
<evidence type="ECO:0000255" key="3">
    <source>
        <dbReference type="PROSITE-ProRule" id="PRU00076"/>
    </source>
</evidence>
<evidence type="ECO:0000255" key="4">
    <source>
        <dbReference type="PROSITE-ProRule" id="PRU00384"/>
    </source>
</evidence>
<evidence type="ECO:0000256" key="5">
    <source>
        <dbReference type="SAM" id="MobiDB-lite"/>
    </source>
</evidence>
<evidence type="ECO:0000269" key="6">
    <source>
    </source>
</evidence>
<evidence type="ECO:0000269" key="7">
    <source>
    </source>
</evidence>
<evidence type="ECO:0000269" key="8">
    <source>
    </source>
</evidence>
<evidence type="ECO:0000269" key="9">
    <source>
    </source>
</evidence>
<evidence type="ECO:0000303" key="10">
    <source>
    </source>
</evidence>
<evidence type="ECO:0000303" key="11">
    <source>
    </source>
</evidence>
<evidence type="ECO:0000303" key="12">
    <source>
    </source>
</evidence>
<evidence type="ECO:0000305" key="13"/>
<gene>
    <name type="primary">MEGF11</name>
    <name type="synonym">KIAA1781</name>
    <name type="ORF">UNQ1949/PRO4432</name>
</gene>
<dbReference type="EMBL" id="AB058677">
    <property type="protein sequence ID" value="BAB47410.2"/>
    <property type="status" value="ALT_INIT"/>
    <property type="molecule type" value="mRNA"/>
</dbReference>
<dbReference type="EMBL" id="AB300051">
    <property type="protein sequence ID" value="BAF64841.1"/>
    <property type="molecule type" value="mRNA"/>
</dbReference>
<dbReference type="EMBL" id="AY358226">
    <property type="protein sequence ID" value="AAQ88593.1"/>
    <property type="molecule type" value="mRNA"/>
</dbReference>
<dbReference type="EMBL" id="AC011847">
    <property type="status" value="NOT_ANNOTATED_CDS"/>
    <property type="molecule type" value="Genomic_DNA"/>
</dbReference>
<dbReference type="EMBL" id="AC084854">
    <property type="status" value="NOT_ANNOTATED_CDS"/>
    <property type="molecule type" value="Genomic_DNA"/>
</dbReference>
<dbReference type="EMBL" id="AC087382">
    <property type="status" value="NOT_ANNOTATED_CDS"/>
    <property type="molecule type" value="Genomic_DNA"/>
</dbReference>
<dbReference type="EMBL" id="BC117419">
    <property type="protein sequence ID" value="AAI17420.1"/>
    <property type="molecule type" value="mRNA"/>
</dbReference>
<dbReference type="EMBL" id="BC126313">
    <property type="protein sequence ID" value="AAI26314.1"/>
    <property type="molecule type" value="mRNA"/>
</dbReference>
<dbReference type="EMBL" id="AL834326">
    <property type="protein sequence ID" value="CAD38994.1"/>
    <property type="status" value="ALT_INIT"/>
    <property type="molecule type" value="mRNA"/>
</dbReference>
<dbReference type="CCDS" id="CCDS10213.2">
    <molecule id="A6BM72-1"/>
</dbReference>
<dbReference type="CCDS" id="CCDS92026.1">
    <molecule id="A6BM72-2"/>
</dbReference>
<dbReference type="RefSeq" id="NP_001371959.1">
    <molecule id="A6BM72-2"/>
    <property type="nucleotide sequence ID" value="NM_001385030.1"/>
</dbReference>
<dbReference type="RefSeq" id="NP_001374079.1">
    <molecule id="A6BM72-1"/>
    <property type="nucleotide sequence ID" value="NM_001387150.1"/>
</dbReference>
<dbReference type="RefSeq" id="NP_115821.2">
    <molecule id="A6BM72-1"/>
    <property type="nucleotide sequence ID" value="NM_032445.3"/>
</dbReference>
<dbReference type="RefSeq" id="XP_016878161.1">
    <property type="nucleotide sequence ID" value="XM_017022672.1"/>
</dbReference>
<dbReference type="SMR" id="A6BM72"/>
<dbReference type="BioGRID" id="124098">
    <property type="interactions" value="5"/>
</dbReference>
<dbReference type="FunCoup" id="A6BM72">
    <property type="interactions" value="42"/>
</dbReference>
<dbReference type="IntAct" id="A6BM72">
    <property type="interactions" value="3"/>
</dbReference>
<dbReference type="MINT" id="A6BM72"/>
<dbReference type="STRING" id="9606.ENSP00000386908"/>
<dbReference type="GlyCosmos" id="A6BM72">
    <property type="glycosylation" value="2 sites, No reported glycans"/>
</dbReference>
<dbReference type="GlyGen" id="A6BM72">
    <property type="glycosylation" value="2 sites"/>
</dbReference>
<dbReference type="iPTMnet" id="A6BM72"/>
<dbReference type="PhosphoSitePlus" id="A6BM72"/>
<dbReference type="BioMuta" id="MEGF11"/>
<dbReference type="jPOST" id="A6BM72"/>
<dbReference type="MassIVE" id="A6BM72"/>
<dbReference type="PaxDb" id="9606-ENSP00000386908"/>
<dbReference type="PeptideAtlas" id="A6BM72"/>
<dbReference type="TopDownProteomics" id="A6BM72-3">
    <molecule id="A6BM72-3"/>
</dbReference>
<dbReference type="Antibodypedia" id="42885">
    <property type="antibodies" value="58 antibodies from 13 providers"/>
</dbReference>
<dbReference type="DNASU" id="84465"/>
<dbReference type="Ensembl" id="ENST00000288745.7">
    <molecule id="A6BM72-2"/>
    <property type="protein sequence ID" value="ENSP00000288745.3"/>
    <property type="gene ID" value="ENSG00000157890.19"/>
</dbReference>
<dbReference type="Ensembl" id="ENST00000409699.6">
    <molecule id="A6BM72-1"/>
    <property type="protein sequence ID" value="ENSP00000386908.2"/>
    <property type="gene ID" value="ENSG00000157890.19"/>
</dbReference>
<dbReference type="Ensembl" id="ENST00000422354.6">
    <molecule id="A6BM72-1"/>
    <property type="protein sequence ID" value="ENSP00000414475.1"/>
    <property type="gene ID" value="ENSG00000157890.19"/>
</dbReference>
<dbReference type="GeneID" id="84465"/>
<dbReference type="KEGG" id="hsa:84465"/>
<dbReference type="UCSC" id="uc002apl.2">
    <molecule id="A6BM72-1"/>
    <property type="organism name" value="human"/>
</dbReference>
<dbReference type="AGR" id="HGNC:29635"/>
<dbReference type="CTD" id="84465"/>
<dbReference type="DisGeNET" id="84465"/>
<dbReference type="GeneCards" id="MEGF11"/>
<dbReference type="HGNC" id="HGNC:29635">
    <property type="gene designation" value="MEGF11"/>
</dbReference>
<dbReference type="HPA" id="ENSG00000157890">
    <property type="expression patterns" value="Tissue enhanced (brain, kidney, retina)"/>
</dbReference>
<dbReference type="MIM" id="612454">
    <property type="type" value="gene"/>
</dbReference>
<dbReference type="neXtProt" id="NX_A6BM72"/>
<dbReference type="OpenTargets" id="ENSG00000157890"/>
<dbReference type="PharmGKB" id="PA144596411"/>
<dbReference type="VEuPathDB" id="HostDB:ENSG00000157890"/>
<dbReference type="eggNOG" id="KOG1218">
    <property type="taxonomic scope" value="Eukaryota"/>
</dbReference>
<dbReference type="GeneTree" id="ENSGT00940000155333"/>
<dbReference type="HOGENOM" id="CLU_008281_1_0_1"/>
<dbReference type="InParanoid" id="A6BM72"/>
<dbReference type="OMA" id="CPCNVTN"/>
<dbReference type="OrthoDB" id="409374at2759"/>
<dbReference type="PAN-GO" id="A6BM72">
    <property type="GO annotations" value="0 GO annotations based on evolutionary models"/>
</dbReference>
<dbReference type="PhylomeDB" id="A6BM72"/>
<dbReference type="TreeFam" id="TF332598"/>
<dbReference type="PathwayCommons" id="A6BM72"/>
<dbReference type="SignaLink" id="A6BM72"/>
<dbReference type="BioGRID-ORCS" id="84465">
    <property type="hits" value="12 hits in 1136 CRISPR screens"/>
</dbReference>
<dbReference type="ChiTaRS" id="MEGF11">
    <property type="organism name" value="human"/>
</dbReference>
<dbReference type="GenomeRNAi" id="84465"/>
<dbReference type="Pharos" id="A6BM72">
    <property type="development level" value="Tdark"/>
</dbReference>
<dbReference type="PRO" id="PR:A6BM72"/>
<dbReference type="Proteomes" id="UP000005640">
    <property type="component" value="Chromosome 15"/>
</dbReference>
<dbReference type="RNAct" id="A6BM72">
    <property type="molecule type" value="protein"/>
</dbReference>
<dbReference type="Bgee" id="ENSG00000157890">
    <property type="expression patterns" value="Expressed in cerebellar hemisphere and 116 other cell types or tissues"/>
</dbReference>
<dbReference type="ExpressionAtlas" id="A6BM72">
    <property type="expression patterns" value="baseline and differential"/>
</dbReference>
<dbReference type="GO" id="GO:0016323">
    <property type="term" value="C:basolateral plasma membrane"/>
    <property type="evidence" value="ECO:0007669"/>
    <property type="project" value="UniProtKB-SubCell"/>
</dbReference>
<dbReference type="GO" id="GO:0034109">
    <property type="term" value="P:homotypic cell-cell adhesion"/>
    <property type="evidence" value="ECO:0000250"/>
    <property type="project" value="UniProtKB"/>
</dbReference>
<dbReference type="GO" id="GO:0010842">
    <property type="term" value="P:retina layer formation"/>
    <property type="evidence" value="ECO:0000250"/>
    <property type="project" value="UniProtKB"/>
</dbReference>
<dbReference type="FunFam" id="2.170.300.10:FF:000007">
    <property type="entry name" value="multiple epidermal growth factor-like domains protein 10"/>
    <property type="match status" value="1"/>
</dbReference>
<dbReference type="FunFam" id="2.10.25.10:FF:000114">
    <property type="entry name" value="Multiple epidermal growth factor-like domains protein 11"/>
    <property type="match status" value="1"/>
</dbReference>
<dbReference type="FunFam" id="2.170.300.10:FF:000006">
    <property type="entry name" value="Multiple epidermal growth factor-like domains protein 11"/>
    <property type="match status" value="1"/>
</dbReference>
<dbReference type="FunFam" id="2.170.300.10:FF:000005">
    <property type="entry name" value="multiple epidermal growth factor-like domains protein 11"/>
    <property type="match status" value="1"/>
</dbReference>
<dbReference type="FunFam" id="2.170.300.10:FF:000015">
    <property type="entry name" value="multiple epidermal growth factor-like domains protein 11 isoform X3"/>
    <property type="match status" value="1"/>
</dbReference>
<dbReference type="Gene3D" id="2.10.25.10">
    <property type="entry name" value="Laminin"/>
    <property type="match status" value="1"/>
</dbReference>
<dbReference type="Gene3D" id="2.170.300.10">
    <property type="entry name" value="Tie2 ligand-binding domain superfamily"/>
    <property type="match status" value="5"/>
</dbReference>
<dbReference type="InterPro" id="IPR013032">
    <property type="entry name" value="EGF-like_CS"/>
</dbReference>
<dbReference type="InterPro" id="IPR000742">
    <property type="entry name" value="EGF-like_dom"/>
</dbReference>
<dbReference type="InterPro" id="IPR057138">
    <property type="entry name" value="EGF_PEAR1L-like"/>
</dbReference>
<dbReference type="InterPro" id="IPR011489">
    <property type="entry name" value="EMI_domain"/>
</dbReference>
<dbReference type="InterPro" id="IPR002049">
    <property type="entry name" value="LE_dom"/>
</dbReference>
<dbReference type="InterPro" id="IPR052485">
    <property type="entry name" value="MEGF_diff_regulators"/>
</dbReference>
<dbReference type="PANTHER" id="PTHR24052">
    <property type="entry name" value="DELTA-RELATED"/>
    <property type="match status" value="1"/>
</dbReference>
<dbReference type="PANTHER" id="PTHR24052:SF13">
    <property type="entry name" value="MULTIPLE EGF LIKE DOMAINS 11"/>
    <property type="match status" value="1"/>
</dbReference>
<dbReference type="Pfam" id="PF00053">
    <property type="entry name" value="EGF_laminin"/>
    <property type="match status" value="5"/>
</dbReference>
<dbReference type="Pfam" id="PF23301">
    <property type="entry name" value="EGF_PEAR1L"/>
    <property type="match status" value="1"/>
</dbReference>
<dbReference type="Pfam" id="PF23106">
    <property type="entry name" value="EGF_Teneurin"/>
    <property type="match status" value="1"/>
</dbReference>
<dbReference type="Pfam" id="PF12661">
    <property type="entry name" value="hEGF"/>
    <property type="match status" value="5"/>
</dbReference>
<dbReference type="PRINTS" id="PR00011">
    <property type="entry name" value="EGFLAMININ"/>
</dbReference>
<dbReference type="SMART" id="SM00181">
    <property type="entry name" value="EGF"/>
    <property type="match status" value="17"/>
</dbReference>
<dbReference type="SMART" id="SM00180">
    <property type="entry name" value="EGF_Lam"/>
    <property type="match status" value="16"/>
</dbReference>
<dbReference type="PROSITE" id="PS00022">
    <property type="entry name" value="EGF_1"/>
    <property type="match status" value="17"/>
</dbReference>
<dbReference type="PROSITE" id="PS01186">
    <property type="entry name" value="EGF_2"/>
    <property type="match status" value="17"/>
</dbReference>
<dbReference type="PROSITE" id="PS50026">
    <property type="entry name" value="EGF_3"/>
    <property type="match status" value="14"/>
</dbReference>
<dbReference type="PROSITE" id="PS51041">
    <property type="entry name" value="EMI"/>
    <property type="match status" value="1"/>
</dbReference>
<organism>
    <name type="scientific">Homo sapiens</name>
    <name type="common">Human</name>
    <dbReference type="NCBI Taxonomy" id="9606"/>
    <lineage>
        <taxon>Eukaryota</taxon>
        <taxon>Metazoa</taxon>
        <taxon>Chordata</taxon>
        <taxon>Craniata</taxon>
        <taxon>Vertebrata</taxon>
        <taxon>Euteleostomi</taxon>
        <taxon>Mammalia</taxon>
        <taxon>Eutheria</taxon>
        <taxon>Euarchontoglires</taxon>
        <taxon>Primates</taxon>
        <taxon>Haplorrhini</taxon>
        <taxon>Catarrhini</taxon>
        <taxon>Hominidae</taxon>
        <taxon>Homo</taxon>
    </lineage>
</organism>
<reference key="1">
    <citation type="journal article" date="2001" name="DNA Res.">
        <title>Prediction of the coding sequences of unidentified human genes. XX. The complete sequences of 100 new cDNA clones from brain which code for large proteins in vitro.</title>
        <authorList>
            <person name="Nagase T."/>
            <person name="Nakayama M."/>
            <person name="Nakajima D."/>
            <person name="Kikuno R."/>
            <person name="Ohara O."/>
        </authorList>
    </citation>
    <scope>NUCLEOTIDE SEQUENCE [LARGE SCALE MRNA] (ISOFORMS 1 AND 2)</scope>
    <scope>VARIANTS ARG-317 AND PHE-861</scope>
    <source>
        <tissue>Brain</tissue>
    </source>
</reference>
<reference key="2">
    <citation type="journal article" date="2003" name="Genome Res.">
        <title>The secreted protein discovery initiative (SPDI), a large-scale effort to identify novel human secreted and transmembrane proteins: a bioinformatics assessment.</title>
        <authorList>
            <person name="Clark H.F."/>
            <person name="Gurney A.L."/>
            <person name="Abaya E."/>
            <person name="Baker K."/>
            <person name="Baldwin D.T."/>
            <person name="Brush J."/>
            <person name="Chen J."/>
            <person name="Chow B."/>
            <person name="Chui C."/>
            <person name="Crowley C."/>
            <person name="Currell B."/>
            <person name="Deuel B."/>
            <person name="Dowd P."/>
            <person name="Eaton D."/>
            <person name="Foster J.S."/>
            <person name="Grimaldi C."/>
            <person name="Gu Q."/>
            <person name="Hass P.E."/>
            <person name="Heldens S."/>
            <person name="Huang A."/>
            <person name="Kim H.S."/>
            <person name="Klimowski L."/>
            <person name="Jin Y."/>
            <person name="Johnson S."/>
            <person name="Lee J."/>
            <person name="Lewis L."/>
            <person name="Liao D."/>
            <person name="Mark M.R."/>
            <person name="Robbie E."/>
            <person name="Sanchez C."/>
            <person name="Schoenfeld J."/>
            <person name="Seshagiri S."/>
            <person name="Simmons L."/>
            <person name="Singh J."/>
            <person name="Smith V."/>
            <person name="Stinson J."/>
            <person name="Vagts A."/>
            <person name="Vandlen R.L."/>
            <person name="Watanabe C."/>
            <person name="Wieand D."/>
            <person name="Woods K."/>
            <person name="Xie M.-H."/>
            <person name="Yansura D.G."/>
            <person name="Yi S."/>
            <person name="Yu G."/>
            <person name="Yuan J."/>
            <person name="Zhang M."/>
            <person name="Zhang Z."/>
            <person name="Goddard A.D."/>
            <person name="Wood W.I."/>
            <person name="Godowski P.J."/>
            <person name="Gray A.M."/>
        </authorList>
    </citation>
    <scope>NUCLEOTIDE SEQUENCE [LARGE SCALE MRNA] (ISOFORM 4)</scope>
</reference>
<reference key="3">
    <citation type="journal article" date="2006" name="Nature">
        <title>Analysis of the DNA sequence and duplication history of human chromosome 15.</title>
        <authorList>
            <person name="Zody M.C."/>
            <person name="Garber M."/>
            <person name="Sharpe T."/>
            <person name="Young S.K."/>
            <person name="Rowen L."/>
            <person name="O'Neill K."/>
            <person name="Whittaker C.A."/>
            <person name="Kamal M."/>
            <person name="Chang J.L."/>
            <person name="Cuomo C.A."/>
            <person name="Dewar K."/>
            <person name="FitzGerald M.G."/>
            <person name="Kodira C.D."/>
            <person name="Madan A."/>
            <person name="Qin S."/>
            <person name="Yang X."/>
            <person name="Abbasi N."/>
            <person name="Abouelleil A."/>
            <person name="Arachchi H.M."/>
            <person name="Baradarani L."/>
            <person name="Birditt B."/>
            <person name="Bloom S."/>
            <person name="Bloom T."/>
            <person name="Borowsky M.L."/>
            <person name="Burke J."/>
            <person name="Butler J."/>
            <person name="Cook A."/>
            <person name="DeArellano K."/>
            <person name="DeCaprio D."/>
            <person name="Dorris L. III"/>
            <person name="Dors M."/>
            <person name="Eichler E.E."/>
            <person name="Engels R."/>
            <person name="Fahey J."/>
            <person name="Fleetwood P."/>
            <person name="Friedman C."/>
            <person name="Gearin G."/>
            <person name="Hall J.L."/>
            <person name="Hensley G."/>
            <person name="Johnson E."/>
            <person name="Jones C."/>
            <person name="Kamat A."/>
            <person name="Kaur A."/>
            <person name="Locke D.P."/>
            <person name="Madan A."/>
            <person name="Munson G."/>
            <person name="Jaffe D.B."/>
            <person name="Lui A."/>
            <person name="Macdonald P."/>
            <person name="Mauceli E."/>
            <person name="Naylor J.W."/>
            <person name="Nesbitt R."/>
            <person name="Nicol R."/>
            <person name="O'Leary S.B."/>
            <person name="Ratcliffe A."/>
            <person name="Rounsley S."/>
            <person name="She X."/>
            <person name="Sneddon K.M.B."/>
            <person name="Stewart S."/>
            <person name="Sougnez C."/>
            <person name="Stone S.M."/>
            <person name="Topham K."/>
            <person name="Vincent D."/>
            <person name="Wang S."/>
            <person name="Zimmer A.R."/>
            <person name="Birren B.W."/>
            <person name="Hood L."/>
            <person name="Lander E.S."/>
            <person name="Nusbaum C."/>
        </authorList>
    </citation>
    <scope>NUCLEOTIDE SEQUENCE [LARGE SCALE GENOMIC DNA]</scope>
</reference>
<reference key="4">
    <citation type="journal article" date="2004" name="Genome Res.">
        <title>The status, quality, and expansion of the NIH full-length cDNA project: the Mammalian Gene Collection (MGC).</title>
        <authorList>
            <consortium name="The MGC Project Team"/>
        </authorList>
    </citation>
    <scope>NUCLEOTIDE SEQUENCE [LARGE SCALE MRNA] (ISOFORM 1)</scope>
    <scope>VARIANTS ASN-95 AND ARG-317</scope>
    <source>
        <tissue>Brain</tissue>
    </source>
</reference>
<reference key="5">
    <citation type="journal article" date="2007" name="BMC Genomics">
        <title>The full-ORF clone resource of the German cDNA consortium.</title>
        <authorList>
            <person name="Bechtel S."/>
            <person name="Rosenfelder H."/>
            <person name="Duda A."/>
            <person name="Schmidt C.P."/>
            <person name="Ernst U."/>
            <person name="Wellenreuther R."/>
            <person name="Mehrle A."/>
            <person name="Schuster C."/>
            <person name="Bahr A."/>
            <person name="Bloecker H."/>
            <person name="Heubner D."/>
            <person name="Hoerlein A."/>
            <person name="Michel G."/>
            <person name="Wedler H."/>
            <person name="Koehrer K."/>
            <person name="Ottenwaelder B."/>
            <person name="Poustka A."/>
            <person name="Wiemann S."/>
            <person name="Schupp I."/>
        </authorList>
    </citation>
    <scope>NUCLEOTIDE SEQUENCE [LARGE SCALE MRNA] OF 255-1044 (ISOFORM 3)</scope>
    <scope>VARIANT ARG-317</scope>
    <source>
        <tissue>Testis</tissue>
    </source>
</reference>
<reference key="6">
    <citation type="journal article" date="2007" name="Exp. Cell Res.">
        <title>The mammalian Ced-1 ortholog MEGF10/KIAA1780 displays a novel adhesion pattern.</title>
        <authorList>
            <person name="Suzuki E."/>
            <person name="Nakayama M."/>
        </authorList>
    </citation>
    <scope>SUBCELLULAR LOCATION</scope>
    <source>
        <tissue>Brain</tissue>
    </source>
</reference>
<keyword id="KW-0025">Alternative splicing</keyword>
<keyword id="KW-1003">Cell membrane</keyword>
<keyword id="KW-1015">Disulfide bond</keyword>
<keyword id="KW-0245">EGF-like domain</keyword>
<keyword id="KW-0325">Glycoprotein</keyword>
<keyword id="KW-0472">Membrane</keyword>
<keyword id="KW-1267">Proteomics identification</keyword>
<keyword id="KW-1185">Reference proteome</keyword>
<keyword id="KW-0677">Repeat</keyword>
<keyword id="KW-0732">Signal</keyword>
<keyword id="KW-0812">Transmembrane</keyword>
<keyword id="KW-1133">Transmembrane helix</keyword>
<name>MEG11_HUMAN</name>